<feature type="chain" id="PRO_0000365634" description="MAGUK p55 subfamily member 3">
    <location>
        <begin position="1"/>
        <end position="585"/>
    </location>
</feature>
<feature type="domain" description="L27 1" evidence="7">
    <location>
        <begin position="6"/>
        <end position="60"/>
    </location>
</feature>
<feature type="domain" description="L27 2" evidence="7">
    <location>
        <begin position="61"/>
        <end position="118"/>
    </location>
</feature>
<feature type="domain" description="PDZ" evidence="5">
    <location>
        <begin position="137"/>
        <end position="218"/>
    </location>
</feature>
<feature type="domain" description="SH3" evidence="6">
    <location>
        <begin position="226"/>
        <end position="296"/>
    </location>
</feature>
<feature type="domain" description="Guanylate kinase-like" evidence="4">
    <location>
        <begin position="385"/>
        <end position="570"/>
    </location>
</feature>
<feature type="region of interest" description="Disordered" evidence="8">
    <location>
        <begin position="510"/>
        <end position="530"/>
    </location>
</feature>
<feature type="modified residue" description="Phosphoserine" evidence="12">
    <location>
        <position position="307"/>
    </location>
</feature>
<reference evidence="9" key="1">
    <citation type="submission" date="2005-07" db="EMBL/GenBank/DDBJ databases">
        <authorList>
            <person name="Mural R.J."/>
            <person name="Adams M.D."/>
            <person name="Myers E.W."/>
            <person name="Smith H.O."/>
            <person name="Venter J.C."/>
        </authorList>
    </citation>
    <scope>NUCLEOTIDE SEQUENCE [LARGE SCALE GENOMIC DNA]</scope>
</reference>
<reference evidence="9 10" key="2">
    <citation type="journal article" date="1998" name="Cell">
        <title>A tripartite protein complex with the potential to couple synaptic vesicle exocytosis to cell adhesion in brain.</title>
        <authorList>
            <person name="Butz S."/>
            <person name="Okamoto M."/>
            <person name="Suedhof T.C."/>
        </authorList>
    </citation>
    <scope>NUCLEOTIDE SEQUENCE [MRNA] OF 1-235</scope>
    <source>
        <tissue evidence="10">Brain</tissue>
    </source>
</reference>
<reference evidence="9" key="3">
    <citation type="submission" date="2009-01" db="UniProtKB">
        <authorList>
            <person name="Maurya D.K."/>
            <person name="Bhargava P."/>
        </authorList>
    </citation>
    <scope>IDENTIFICATION BY MASS SPECTROMETRY</scope>
</reference>
<reference key="4">
    <citation type="journal article" date="2012" name="Nat. Commun.">
        <title>Quantitative maps of protein phosphorylation sites across 14 different rat organs and tissues.</title>
        <authorList>
            <person name="Lundby A."/>
            <person name="Secher A."/>
            <person name="Lage K."/>
            <person name="Nordsborg N.B."/>
            <person name="Dmytriyev A."/>
            <person name="Lundby C."/>
            <person name="Olsen J.V."/>
        </authorList>
    </citation>
    <scope>PHOSPHORYLATION [LARGE SCALE ANALYSIS] AT SER-307</scope>
    <scope>IDENTIFICATION BY MASS SPECTROMETRY [LARGE SCALE ANALYSIS]</scope>
</reference>
<keyword id="KW-0965">Cell junction</keyword>
<keyword id="KW-1003">Cell membrane</keyword>
<keyword id="KW-0472">Membrane</keyword>
<keyword id="KW-0597">Phosphoprotein</keyword>
<keyword id="KW-1185">Reference proteome</keyword>
<keyword id="KW-0677">Repeat</keyword>
<keyword id="KW-0728">SH3 domain</keyword>
<dbReference type="EMBL" id="CH473948">
    <property type="protein sequence ID" value="EDM06165.1"/>
    <property type="molecule type" value="Genomic_DNA"/>
</dbReference>
<dbReference type="EMBL" id="AF087697">
    <property type="protein sequence ID" value="AAC78485.1"/>
    <property type="molecule type" value="mRNA"/>
</dbReference>
<dbReference type="RefSeq" id="NP_446120.1">
    <property type="nucleotide sequence ID" value="NM_053668.1"/>
</dbReference>
<dbReference type="RefSeq" id="XP_008766153.1">
    <property type="nucleotide sequence ID" value="XM_008767931.3"/>
</dbReference>
<dbReference type="RefSeq" id="XP_008766154.1">
    <property type="nucleotide sequence ID" value="XM_008767932.2"/>
</dbReference>
<dbReference type="SMR" id="O88954"/>
<dbReference type="BioGRID" id="250305">
    <property type="interactions" value="2"/>
</dbReference>
<dbReference type="FunCoup" id="O88954">
    <property type="interactions" value="540"/>
</dbReference>
<dbReference type="STRING" id="10116.ENSRNOP00000071372"/>
<dbReference type="iPTMnet" id="O88954"/>
<dbReference type="PhosphoSitePlus" id="O88954"/>
<dbReference type="jPOST" id="O88954"/>
<dbReference type="PaxDb" id="10116-ENSRNOP00000028264"/>
<dbReference type="Ensembl" id="ENSRNOT00000028264.8">
    <property type="protein sequence ID" value="ENSRNOP00000028264.5"/>
    <property type="gene ID" value="ENSRNOG00000033653.6"/>
</dbReference>
<dbReference type="GeneID" id="114202"/>
<dbReference type="KEGG" id="rno:114202"/>
<dbReference type="UCSC" id="RGD:620015">
    <property type="organism name" value="rat"/>
</dbReference>
<dbReference type="AGR" id="RGD:620015"/>
<dbReference type="CTD" id="4356"/>
<dbReference type="RGD" id="620015">
    <property type="gene designation" value="Mpp3"/>
</dbReference>
<dbReference type="eggNOG" id="KOG0609">
    <property type="taxonomic scope" value="Eukaryota"/>
</dbReference>
<dbReference type="GeneTree" id="ENSGT00940000157190"/>
<dbReference type="InParanoid" id="O88954"/>
<dbReference type="OMA" id="MARNKVC"/>
<dbReference type="OrthoDB" id="49604at9989"/>
<dbReference type="PhylomeDB" id="O88954"/>
<dbReference type="TreeFam" id="TF314263"/>
<dbReference type="PRO" id="PR:O88954"/>
<dbReference type="Proteomes" id="UP000002494">
    <property type="component" value="Chromosome 10"/>
</dbReference>
<dbReference type="Proteomes" id="UP000234681">
    <property type="component" value="Chromosome 10"/>
</dbReference>
<dbReference type="Bgee" id="ENSRNOG00000033653">
    <property type="expression patterns" value="Expressed in cerebellum and 20 other cell types or tissues"/>
</dbReference>
<dbReference type="GO" id="GO:0005912">
    <property type="term" value="C:adherens junction"/>
    <property type="evidence" value="ECO:0000250"/>
    <property type="project" value="UniProtKB"/>
</dbReference>
<dbReference type="GO" id="GO:0016324">
    <property type="term" value="C:apical plasma membrane"/>
    <property type="evidence" value="ECO:0000250"/>
    <property type="project" value="UniProtKB"/>
</dbReference>
<dbReference type="GO" id="GO:0005911">
    <property type="term" value="C:cell-cell junction"/>
    <property type="evidence" value="ECO:0000318"/>
    <property type="project" value="GO_Central"/>
</dbReference>
<dbReference type="GO" id="GO:0005886">
    <property type="term" value="C:plasma membrane"/>
    <property type="evidence" value="ECO:0000250"/>
    <property type="project" value="UniProtKB"/>
</dbReference>
<dbReference type="GO" id="GO:0030165">
    <property type="term" value="F:PDZ domain binding"/>
    <property type="evidence" value="ECO:0000353"/>
    <property type="project" value="RGD"/>
</dbReference>
<dbReference type="CDD" id="cd00071">
    <property type="entry name" value="GMPK"/>
    <property type="match status" value="1"/>
</dbReference>
<dbReference type="CDD" id="cd06799">
    <property type="entry name" value="PDZ_MPP3-MPP4-MPP7-like"/>
    <property type="match status" value="1"/>
</dbReference>
<dbReference type="CDD" id="cd12039">
    <property type="entry name" value="SH3_MPP3"/>
    <property type="match status" value="1"/>
</dbReference>
<dbReference type="FunFam" id="3.30.63.10:FF:000002">
    <property type="entry name" value="Guanylate kinase 1"/>
    <property type="match status" value="1"/>
</dbReference>
<dbReference type="FunFam" id="2.30.30.40:FF:000215">
    <property type="entry name" value="MAGUK p55 subfamily member 3"/>
    <property type="match status" value="1"/>
</dbReference>
<dbReference type="FunFam" id="3.40.50.300:FF:003612">
    <property type="entry name" value="MAGUK p55 subfamily member 3"/>
    <property type="match status" value="1"/>
</dbReference>
<dbReference type="FunFam" id="2.30.42.10:FF:000046">
    <property type="entry name" value="MAGUK p55 subfamily member 7"/>
    <property type="match status" value="1"/>
</dbReference>
<dbReference type="Gene3D" id="2.30.42.10">
    <property type="match status" value="1"/>
</dbReference>
<dbReference type="Gene3D" id="1.10.287.650">
    <property type="entry name" value="L27 domain"/>
    <property type="match status" value="1"/>
</dbReference>
<dbReference type="Gene3D" id="3.40.50.300">
    <property type="entry name" value="P-loop containing nucleotide triphosphate hydrolases"/>
    <property type="match status" value="1"/>
</dbReference>
<dbReference type="Gene3D" id="2.30.30.40">
    <property type="entry name" value="SH3 Domains"/>
    <property type="match status" value="1"/>
</dbReference>
<dbReference type="InterPro" id="IPR008145">
    <property type="entry name" value="GK/Ca_channel_bsu"/>
</dbReference>
<dbReference type="InterPro" id="IPR008144">
    <property type="entry name" value="Guanylate_kin-like_dom"/>
</dbReference>
<dbReference type="InterPro" id="IPR020590">
    <property type="entry name" value="Guanylate_kinase_CS"/>
</dbReference>
<dbReference type="InterPro" id="IPR014775">
    <property type="entry name" value="L27_C"/>
</dbReference>
<dbReference type="InterPro" id="IPR004172">
    <property type="entry name" value="L27_dom"/>
</dbReference>
<dbReference type="InterPro" id="IPR036892">
    <property type="entry name" value="L27_dom_sf"/>
</dbReference>
<dbReference type="InterPro" id="IPR050716">
    <property type="entry name" value="MAGUK"/>
</dbReference>
<dbReference type="InterPro" id="IPR035604">
    <property type="entry name" value="MPP3_SH3"/>
</dbReference>
<dbReference type="InterPro" id="IPR027417">
    <property type="entry name" value="P-loop_NTPase"/>
</dbReference>
<dbReference type="InterPro" id="IPR001478">
    <property type="entry name" value="PDZ"/>
</dbReference>
<dbReference type="InterPro" id="IPR036034">
    <property type="entry name" value="PDZ_sf"/>
</dbReference>
<dbReference type="InterPro" id="IPR036028">
    <property type="entry name" value="SH3-like_dom_sf"/>
</dbReference>
<dbReference type="InterPro" id="IPR001452">
    <property type="entry name" value="SH3_domain"/>
</dbReference>
<dbReference type="PANTHER" id="PTHR23122">
    <property type="entry name" value="MEMBRANE-ASSOCIATED GUANYLATE KINASE MAGUK"/>
    <property type="match status" value="1"/>
</dbReference>
<dbReference type="Pfam" id="PF00625">
    <property type="entry name" value="Guanylate_kin"/>
    <property type="match status" value="1"/>
</dbReference>
<dbReference type="Pfam" id="PF02828">
    <property type="entry name" value="L27"/>
    <property type="match status" value="2"/>
</dbReference>
<dbReference type="Pfam" id="PF00595">
    <property type="entry name" value="PDZ"/>
    <property type="match status" value="1"/>
</dbReference>
<dbReference type="Pfam" id="PF07653">
    <property type="entry name" value="SH3_2"/>
    <property type="match status" value="1"/>
</dbReference>
<dbReference type="SMART" id="SM00072">
    <property type="entry name" value="GuKc"/>
    <property type="match status" value="1"/>
</dbReference>
<dbReference type="SMART" id="SM00569">
    <property type="entry name" value="L27"/>
    <property type="match status" value="2"/>
</dbReference>
<dbReference type="SMART" id="SM00228">
    <property type="entry name" value="PDZ"/>
    <property type="match status" value="1"/>
</dbReference>
<dbReference type="SMART" id="SM00326">
    <property type="entry name" value="SH3"/>
    <property type="match status" value="1"/>
</dbReference>
<dbReference type="SUPFAM" id="SSF101288">
    <property type="entry name" value="L27 domain"/>
    <property type="match status" value="1"/>
</dbReference>
<dbReference type="SUPFAM" id="SSF52540">
    <property type="entry name" value="P-loop containing nucleoside triphosphate hydrolases"/>
    <property type="match status" value="1"/>
</dbReference>
<dbReference type="SUPFAM" id="SSF50156">
    <property type="entry name" value="PDZ domain-like"/>
    <property type="match status" value="1"/>
</dbReference>
<dbReference type="SUPFAM" id="SSF50044">
    <property type="entry name" value="SH3-domain"/>
    <property type="match status" value="1"/>
</dbReference>
<dbReference type="PROSITE" id="PS00856">
    <property type="entry name" value="GUANYLATE_KINASE_1"/>
    <property type="match status" value="1"/>
</dbReference>
<dbReference type="PROSITE" id="PS50052">
    <property type="entry name" value="GUANYLATE_KINASE_2"/>
    <property type="match status" value="1"/>
</dbReference>
<dbReference type="PROSITE" id="PS51022">
    <property type="entry name" value="L27"/>
    <property type="match status" value="2"/>
</dbReference>
<dbReference type="PROSITE" id="PS50106">
    <property type="entry name" value="PDZ"/>
    <property type="match status" value="1"/>
</dbReference>
<dbReference type="PROSITE" id="PS50002">
    <property type="entry name" value="SH3"/>
    <property type="match status" value="1"/>
</dbReference>
<organism>
    <name type="scientific">Rattus norvegicus</name>
    <name type="common">Rat</name>
    <dbReference type="NCBI Taxonomy" id="10116"/>
    <lineage>
        <taxon>Eukaryota</taxon>
        <taxon>Metazoa</taxon>
        <taxon>Chordata</taxon>
        <taxon>Craniata</taxon>
        <taxon>Vertebrata</taxon>
        <taxon>Euteleostomi</taxon>
        <taxon>Mammalia</taxon>
        <taxon>Eutheria</taxon>
        <taxon>Euarchontoglires</taxon>
        <taxon>Glires</taxon>
        <taxon>Rodentia</taxon>
        <taxon>Myomorpha</taxon>
        <taxon>Muroidea</taxon>
        <taxon>Muridae</taxon>
        <taxon>Murinae</taxon>
        <taxon>Rattus</taxon>
    </lineage>
</organism>
<proteinExistence type="evidence at protein level"/>
<comment type="function">
    <text evidence="1 2">Participates in cell spreading through the phosphoinositide-3-kinase (PI3K) pathway by connecting CADM1 to DLG1 and the regulatory subunit of phosphoinositide-3-kinase (PI3K) (By similarity). Stabilizes HTR2C at the plasma membrane and prevents its desensitization. May participates in the maintenance of adherens junctions (By similarity).</text>
</comment>
<comment type="subunit">
    <text evidence="1 2">Interacts with HTR2C; this interaction stabilizes the receptor at the plasma membrane and prevents the desensitization of the HTR2C receptor-mediated calcium response. Interacts with HTR2A. Interacts with HTR4 (By similarity). Interacts (via PDZ domain) with CADM1 (via C-terminus)Interacts (via PDZ domain) with CADM1; this interaction connects CADM1 with DLG1 (By similarity). Interacts (via Guanylate kinase-like domain) with PALS1 (By similarity). Interacts with DLG1 (via N-terminus); this interaction connects CADM1 with DLG1 and links CADM1 with the regulatory subunit of phosphoinositide-3-kinase (PI3K) by forming a multiprotein complex and participates in cell spreading (By similarity).</text>
</comment>
<comment type="subcellular location">
    <subcellularLocation>
        <location evidence="1">Apical cell membrane</location>
    </subcellularLocation>
    <subcellularLocation>
        <location evidence="2">Cell membrane</location>
    </subcellularLocation>
    <subcellularLocation>
        <location evidence="2">Cell junction</location>
        <location evidence="2">Adherens junction</location>
    </subcellularLocation>
    <text evidence="1 2">Localized in apical villi of Mueller glia cells. Localized at the apical membrane in the developing cortex and colocalized with apical proteins and adherens junction proteins (By similarity). Localized at the outer limiting membrane (OLM), and outer plexiform (OPL) of retina (By similarity).</text>
</comment>
<comment type="similarity">
    <text evidence="3">Belongs to the MAGUK family.</text>
</comment>
<sequence>MPVLSEDSGLHETLALLTSQLRPDSNHREEMGFLRDVFSEKSLGYLMKIHEKLRYYERQSPTPVLHSAMALAEDVMEELQAASVHSDERELLQLLSTPHLRAVLMVHDTVAQKNFDPVLPPLPDNIDEDFEEESVKIVRLVKNKEPLGATIRRDEHSGAVVVARIMRGGAADRSGLVHVGDELREVNGITVLHKRPDEISQILAQSQGSITLKIIPATQEEDRFKESKVFMRALFHYDPREDRAIPCQEAGLPFQQRQVLEVVSQDDPTWWQAKRVGDTNLRAGLIPSKQFQERRLSYRRTTGTIPSPQNLRKPLYDQPCDKETCDCDGYFKGHYVAGLRRSFRLGCRERLTGSQEVKVPVGAESQVLLTYEEVARYQHQPGERSRLVVLIGSLGAHLHELKQRVVAEDPQHFGVAVPHTTRPRKSHEREGVEYHFVSKQAFEADIQHNKFLEHGEHKENLYGTSLEAIQTVMAKNKVCLVDVEPEALRHLRTPEFKPYVIFVKPAIQEKRKTPPVSPDSEDPATPLDEQQQEMAASAAFIDQHYGHLIDTVLVRQDLQSVCSQLRAVIESLSKDTYWVPISWVR</sequence>
<protein>
    <recommendedName>
        <fullName evidence="9">MAGUK p55 subfamily member 3</fullName>
    </recommendedName>
    <alternativeName>
        <fullName>Discs large homolog 3</fullName>
    </alternativeName>
    <alternativeName>
        <fullName evidence="1">Protein MPP3</fullName>
    </alternativeName>
</protein>
<accession>O88954</accession>
<accession>A6HJG0</accession>
<evidence type="ECO:0000250" key="1">
    <source>
        <dbReference type="UniProtKB" id="O88910"/>
    </source>
</evidence>
<evidence type="ECO:0000250" key="2">
    <source>
        <dbReference type="UniProtKB" id="Q13368"/>
    </source>
</evidence>
<evidence type="ECO:0000255" key="3"/>
<evidence type="ECO:0000255" key="4">
    <source>
        <dbReference type="PROSITE-ProRule" id="PRU00100"/>
    </source>
</evidence>
<evidence type="ECO:0000255" key="5">
    <source>
        <dbReference type="PROSITE-ProRule" id="PRU00143"/>
    </source>
</evidence>
<evidence type="ECO:0000255" key="6">
    <source>
        <dbReference type="PROSITE-ProRule" id="PRU00192"/>
    </source>
</evidence>
<evidence type="ECO:0000255" key="7">
    <source>
        <dbReference type="PROSITE-ProRule" id="PRU00365"/>
    </source>
</evidence>
<evidence type="ECO:0000256" key="8">
    <source>
        <dbReference type="SAM" id="MobiDB-lite"/>
    </source>
</evidence>
<evidence type="ECO:0000305" key="9"/>
<evidence type="ECO:0000312" key="10">
    <source>
        <dbReference type="EMBL" id="AAC78485.1"/>
    </source>
</evidence>
<evidence type="ECO:0000312" key="11">
    <source>
        <dbReference type="RGD" id="620015"/>
    </source>
</evidence>
<evidence type="ECO:0007744" key="12">
    <source>
    </source>
</evidence>
<gene>
    <name evidence="11" type="primary">Mpp3</name>
    <name type="synonym">Dlg3</name>
    <name evidence="11" type="synonym">Dusp3</name>
</gene>
<name>MPP3_RAT</name>